<protein>
    <recommendedName>
        <fullName evidence="3">Trans-enoyl reductase milB</fullName>
        <ecNumber evidence="3">1.-.-.-</ecNumber>
    </recommendedName>
    <alternativeName>
        <fullName evidence="3">Cordypyrones biosynthesis cluster protein B</fullName>
    </alternativeName>
</protein>
<dbReference type="EC" id="1.-.-.-" evidence="3"/>
<dbReference type="EMBL" id="JH126407">
    <property type="protein sequence ID" value="EGX87723.1"/>
    <property type="molecule type" value="Genomic_DNA"/>
</dbReference>
<dbReference type="RefSeq" id="XP_006674542.1">
    <property type="nucleotide sequence ID" value="XM_006674479.1"/>
</dbReference>
<dbReference type="SMR" id="G3JUI7"/>
<dbReference type="GeneID" id="18171348"/>
<dbReference type="KEGG" id="cmt:CCM_09345"/>
<dbReference type="VEuPathDB" id="FungiDB:CCM_09345"/>
<dbReference type="eggNOG" id="KOG1198">
    <property type="taxonomic scope" value="Eukaryota"/>
</dbReference>
<dbReference type="HOGENOM" id="CLU_026673_16_1_1"/>
<dbReference type="InParanoid" id="G3JUI7"/>
<dbReference type="OrthoDB" id="48317at2759"/>
<dbReference type="Proteomes" id="UP000001610">
    <property type="component" value="Unassembled WGS sequence"/>
</dbReference>
<dbReference type="GO" id="GO:0000166">
    <property type="term" value="F:nucleotide binding"/>
    <property type="evidence" value="ECO:0007669"/>
    <property type="project" value="UniProtKB-KW"/>
</dbReference>
<dbReference type="GO" id="GO:0016651">
    <property type="term" value="F:oxidoreductase activity, acting on NAD(P)H"/>
    <property type="evidence" value="ECO:0007669"/>
    <property type="project" value="InterPro"/>
</dbReference>
<dbReference type="CDD" id="cd08249">
    <property type="entry name" value="enoyl_reductase_like"/>
    <property type="match status" value="1"/>
</dbReference>
<dbReference type="Gene3D" id="3.90.180.10">
    <property type="entry name" value="Medium-chain alcohol dehydrogenases, catalytic domain"/>
    <property type="match status" value="1"/>
</dbReference>
<dbReference type="Gene3D" id="3.40.50.720">
    <property type="entry name" value="NAD(P)-binding Rossmann-like Domain"/>
    <property type="match status" value="1"/>
</dbReference>
<dbReference type="InterPro" id="IPR013149">
    <property type="entry name" value="ADH-like_C"/>
</dbReference>
<dbReference type="InterPro" id="IPR013154">
    <property type="entry name" value="ADH-like_N"/>
</dbReference>
<dbReference type="InterPro" id="IPR011032">
    <property type="entry name" value="GroES-like_sf"/>
</dbReference>
<dbReference type="InterPro" id="IPR036291">
    <property type="entry name" value="NAD(P)-bd_dom_sf"/>
</dbReference>
<dbReference type="InterPro" id="IPR020843">
    <property type="entry name" value="PKS_ER"/>
</dbReference>
<dbReference type="InterPro" id="IPR047122">
    <property type="entry name" value="Trans-enoyl_RdTase-like"/>
</dbReference>
<dbReference type="PANTHER" id="PTHR45348">
    <property type="entry name" value="HYPOTHETICAL OXIDOREDUCTASE (EUROFUNG)"/>
    <property type="match status" value="1"/>
</dbReference>
<dbReference type="PANTHER" id="PTHR45348:SF6">
    <property type="entry name" value="TRANS-ENOYL REDUCTASE APDC"/>
    <property type="match status" value="1"/>
</dbReference>
<dbReference type="Pfam" id="PF08240">
    <property type="entry name" value="ADH_N"/>
    <property type="match status" value="1"/>
</dbReference>
<dbReference type="Pfam" id="PF00107">
    <property type="entry name" value="ADH_zinc_N"/>
    <property type="match status" value="1"/>
</dbReference>
<dbReference type="SMART" id="SM00829">
    <property type="entry name" value="PKS_ER"/>
    <property type="match status" value="1"/>
</dbReference>
<dbReference type="SUPFAM" id="SSF50129">
    <property type="entry name" value="GroES-like"/>
    <property type="match status" value="1"/>
</dbReference>
<dbReference type="SUPFAM" id="SSF51735">
    <property type="entry name" value="NAD(P)-binding Rossmann-fold domains"/>
    <property type="match status" value="1"/>
</dbReference>
<accession>G3JUI7</accession>
<organism>
    <name type="scientific">Cordyceps militaris (strain CM01)</name>
    <name type="common">Caterpillar fungus</name>
    <dbReference type="NCBI Taxonomy" id="983644"/>
    <lineage>
        <taxon>Eukaryota</taxon>
        <taxon>Fungi</taxon>
        <taxon>Dikarya</taxon>
        <taxon>Ascomycota</taxon>
        <taxon>Pezizomycotina</taxon>
        <taxon>Sordariomycetes</taxon>
        <taxon>Hypocreomycetidae</taxon>
        <taxon>Hypocreales</taxon>
        <taxon>Cordycipitaceae</taxon>
        <taxon>Cordyceps</taxon>
    </lineage>
</organism>
<comment type="function">
    <text evidence="2">Trans-enoyl reductase; part of the gene cluster that mediates the biosynthesis of cordypyrones A and B, 2 pyrones that show modest activities against pathogenic bacteria including methicillin-resistant Staphylococcus aureus (MRSA), Mycobacterium tuberculosis and Bacillus cereus (PubMed:34548637). The HR-PKS milA catalyzes the formation of cordypyrones A via condensation of one acetate with 10 malonate units (PubMed:34548637). Since milA lacks an enoyl reductase domain, the 2 beta-keto processing domains DH and KR of milA collaborate with the trans-enoyl reductase milB to catalyze the different levels of reduction (PubMed:34548637). The cytochrome P450 monooxygenase milC then hydroxylates the C-22 of cordypyrones A to yield cordypyrones B (PubMed:34548637).</text>
</comment>
<comment type="catalytic activity">
    <reaction evidence="2">
        <text>10 malonyl-CoA + acetyl-CoA + 3 AH2 + 8 NADPH + 18 H(+) = cordypyrone A + 3 A + 10 CO2 + 8 NADP(+) + 11 CoA + 8 H2O</text>
        <dbReference type="Rhea" id="RHEA:71139"/>
        <dbReference type="ChEBI" id="CHEBI:13193"/>
        <dbReference type="ChEBI" id="CHEBI:15377"/>
        <dbReference type="ChEBI" id="CHEBI:15378"/>
        <dbReference type="ChEBI" id="CHEBI:16526"/>
        <dbReference type="ChEBI" id="CHEBI:17499"/>
        <dbReference type="ChEBI" id="CHEBI:57287"/>
        <dbReference type="ChEBI" id="CHEBI:57288"/>
        <dbReference type="ChEBI" id="CHEBI:57384"/>
        <dbReference type="ChEBI" id="CHEBI:57783"/>
        <dbReference type="ChEBI" id="CHEBI:58349"/>
        <dbReference type="ChEBI" id="CHEBI:190187"/>
    </reaction>
    <physiologicalReaction direction="left-to-right" evidence="2">
        <dbReference type="Rhea" id="RHEA:71140"/>
    </physiologicalReaction>
</comment>
<comment type="pathway">
    <text evidence="2">Secondary metabolite biosynthesis.</text>
</comment>
<comment type="subunit">
    <text evidence="1">Monomer.</text>
</comment>
<comment type="similarity">
    <text evidence="4">Belongs to the zinc-containing alcohol dehydrogenase family.</text>
</comment>
<reference key="1">
    <citation type="journal article" date="2011" name="Genome Biol.">
        <title>Genome sequence of the insect pathogenic fungus Cordyceps militaris, a valued traditional Chinese medicine.</title>
        <authorList>
            <person name="Zheng P."/>
            <person name="Xia Y."/>
            <person name="Xiao G."/>
            <person name="Xiong C."/>
            <person name="Hu X."/>
            <person name="Zhang S."/>
            <person name="Zheng H."/>
            <person name="Huang Y."/>
            <person name="Zhou Y."/>
            <person name="Wang S."/>
            <person name="Zhao G.-P."/>
            <person name="Liu X."/>
            <person name="St Leger R.J."/>
            <person name="Wang C."/>
        </authorList>
    </citation>
    <scope>NUCLEOTIDE SEQUENCE [LARGE SCALE GENOMIC DNA]</scope>
    <source>
        <strain>CM01</strain>
    </source>
</reference>
<reference key="2">
    <citation type="journal article" date="2022" name="J. Antibiot.">
        <title>Heterologous expression of a natural product biosynthetic gene cluster from Cordyceps militaris.</title>
        <authorList>
            <person name="Gao Y.L."/>
            <person name="Yu C."/>
            <person name="Li L."/>
        </authorList>
    </citation>
    <scope>FUNCTION</scope>
    <scope>CATALYTIC ACTIVITY</scope>
    <scope>PATHWAY</scope>
</reference>
<keyword id="KW-0521">NADP</keyword>
<keyword id="KW-0547">Nucleotide-binding</keyword>
<keyword id="KW-0560">Oxidoreductase</keyword>
<keyword id="KW-1185">Reference proteome</keyword>
<feature type="chain" id="PRO_0000455746" description="Trans-enoyl reductase milB">
    <location>
        <begin position="1"/>
        <end position="358"/>
    </location>
</feature>
<feature type="binding site" evidence="1">
    <location>
        <begin position="48"/>
        <end position="51"/>
    </location>
    <ligand>
        <name>NADP(+)</name>
        <dbReference type="ChEBI" id="CHEBI:58349"/>
    </ligand>
</feature>
<feature type="binding site" evidence="1">
    <location>
        <begin position="170"/>
        <end position="173"/>
    </location>
    <ligand>
        <name>NADP(+)</name>
        <dbReference type="ChEBI" id="CHEBI:58349"/>
    </ligand>
</feature>
<feature type="binding site" evidence="1">
    <location>
        <begin position="193"/>
        <end position="196"/>
    </location>
    <ligand>
        <name>NADP(+)</name>
        <dbReference type="ChEBI" id="CHEBI:58349"/>
    </ligand>
</feature>
<feature type="binding site" evidence="1">
    <location>
        <position position="211"/>
    </location>
    <ligand>
        <name>NADP(+)</name>
        <dbReference type="ChEBI" id="CHEBI:58349"/>
    </ligand>
</feature>
<feature type="binding site" evidence="1">
    <location>
        <begin position="258"/>
        <end position="259"/>
    </location>
    <ligand>
        <name>NADP(+)</name>
        <dbReference type="ChEBI" id="CHEBI:58349"/>
    </ligand>
</feature>
<feature type="binding site" evidence="1">
    <location>
        <begin position="349"/>
        <end position="350"/>
    </location>
    <ligand>
        <name>NADP(+)</name>
        <dbReference type="ChEBI" id="CHEBI:58349"/>
    </ligand>
</feature>
<proteinExistence type="evidence at protein level"/>
<name>MILB_CORMM</name>
<evidence type="ECO:0000250" key="1">
    <source>
        <dbReference type="UniProtKB" id="Q9Y7D0"/>
    </source>
</evidence>
<evidence type="ECO:0000269" key="2">
    <source>
    </source>
</evidence>
<evidence type="ECO:0000303" key="3">
    <source>
    </source>
</evidence>
<evidence type="ECO:0000305" key="4"/>
<gene>
    <name evidence="3" type="primary">milB</name>
    <name type="ORF">CCM_09345</name>
</gene>
<sequence>MTTVPTTQRAVVVGPEDGSVVVAESIPLPDIEPDAVLVQVSAVALNPVDTKMMPGFLNPGNVLGLDFAGTVVAVGPAQPAWRSLQVGDRVFGCTDGCDSRRPRVGAFTQFTACRGSILIKMPDHMSFATAASMGNAIFSSGFALFHSLQLPGSLTATAEKSHWVLIYGGATATGTMALQFLRRAGHKPIAVCSAKHFDMAREYGAVAAFDYHSESHVQEIRDLTKNALSFAFDCVTTQSSVLACEEAMGRLGGRYTALDPFDPTLVSRKAVKLDWILTLTLMGRGSVWPKPFGCEPDEALLTWGTKLAEVAEGVLAEGDHVLKAHPMRIMEGGLDAIPSGIDAIRQGQVRGFKLVYLL</sequence>